<sequence>MELKTEEEEVGGVQPVSIQAFASSSTLHGLAHIFSYERLSLKRALWALCFLGSLAVLLCVCTERVQYYFCYHHVTKLDEVAASQLTFPAVTLCNLNEFRFSQVSKNDLYHAGELLALLNNRYEIPDTQMADEKQLEILQDKANFRSFKPKPFNMREFYDRAGHDIRDMLLSCHFRGEACSAEDFKVVFTRYGKCYTFNSGQDGRPRLKTMKGGTGNGLEIMLDIQQDEYLPVWGETDETSFEAGIKVQIHSQDEPPFIDQLGFGVAPGFQTFVSCQEQRLIYLPSPWGTCNAVTMDSDFFDSYSITACRIDCETRYLVENCNCRMVHMPGDAPYCTPEQYKECADPALDFLVEKDQEYCVCEMPCNLTRYGKELSMVKIPSKASAKYLAKKFNKSEQYIGENILVLDIFFEVLNYETIEQKKAYEIAGLLGDIGGQMGLFIGASILTVLELFDYAYEVIKHRLCRRGKCQKEAKRNSADKGVALSLDDVKRHNPCESLRGHPAGMTYAANILPHHPARGTFEDFTC</sequence>
<feature type="chain" id="PRO_0000181295" description="Acid-sensing ion channel 1">
    <location>
        <begin position="1"/>
        <end position="526"/>
    </location>
</feature>
<feature type="topological domain" description="Cytoplasmic" evidence="1">
    <location>
        <begin position="1"/>
        <end position="49"/>
    </location>
</feature>
<feature type="transmembrane region" description="Helical" evidence="1">
    <location>
        <begin position="50"/>
        <end position="66"/>
    </location>
</feature>
<feature type="topological domain" description="Extracellular" evidence="1">
    <location>
        <begin position="67"/>
        <end position="425"/>
    </location>
</feature>
<feature type="transmembrane region" description="Discontinuously helical" evidence="1">
    <location>
        <begin position="426"/>
        <end position="456"/>
    </location>
</feature>
<feature type="topological domain" description="Cytoplasmic" evidence="1">
    <location>
        <begin position="457"/>
        <end position="526"/>
    </location>
</feature>
<feature type="short sequence motif" description="GAS motif; ion selectivity filter" evidence="2">
    <location>
        <begin position="442"/>
        <end position="444"/>
    </location>
</feature>
<feature type="site" description="Involved in channel desensitization; the process by which the channel becomes unresponsive to proton stimulation" evidence="2">
    <location>
        <position position="79"/>
    </location>
</feature>
<feature type="site" description="Involved in proton-dependent gating" evidence="1">
    <location>
        <position position="355"/>
    </location>
</feature>
<feature type="modified residue" description="Phosphoserine; by PKA" evidence="1">
    <location>
        <position position="477"/>
    </location>
</feature>
<feature type="modified residue" description="Phosphoserine" evidence="19">
    <location>
        <position position="497"/>
    </location>
</feature>
<feature type="glycosylation site" description="N-linked (GlcNAc...) asparagine" evidence="3">
    <location>
        <position position="366"/>
    </location>
</feature>
<feature type="glycosylation site" description="N-linked (GlcNAc...) asparagine" evidence="3">
    <location>
        <position position="393"/>
    </location>
</feature>
<feature type="disulfide bond" evidence="2">
    <location>
        <begin position="93"/>
        <end position="194"/>
    </location>
</feature>
<feature type="disulfide bond" evidence="2">
    <location>
        <begin position="172"/>
        <end position="179"/>
    </location>
</feature>
<feature type="disulfide bond" evidence="2">
    <location>
        <begin position="290"/>
        <end position="365"/>
    </location>
</feature>
<feature type="disulfide bond" evidence="2">
    <location>
        <begin position="308"/>
        <end position="361"/>
    </location>
</feature>
<feature type="disulfide bond" evidence="2">
    <location>
        <begin position="312"/>
        <end position="359"/>
    </location>
</feature>
<feature type="disulfide bond" evidence="2">
    <location>
        <begin position="321"/>
        <end position="343"/>
    </location>
</feature>
<feature type="disulfide bond" evidence="2">
    <location>
        <begin position="323"/>
        <end position="335"/>
    </location>
</feature>
<feature type="splice variant" id="VSP_015614" description="In isoform Asic1b." evidence="14">
    <location>
        <begin position="1"/>
        <end position="184"/>
    </location>
</feature>
<feature type="splice variant" id="VSP_015615" description="In isoform Asic1b." evidence="14">
    <original>K</original>
    <variation>MPIQIFCSVSFSSGEEAPGSMGDIWGPHHHHRQQQDSSESEEEEEKEKESGMELDEGDSPRDLVAFANSCTLHGASHVFVEGGPGPRQALWAVAFVIALGAFLCQVGDRVAYYLSYPHVTLLDEVATTELVFPAVTFCNTNAVRLSQLSYPDLLYLAPMLGLDESDDPGVPLAPPGPEAFSGEPFNLHRFYNRSCHRLEDMLLYCSYCGGPCGPHNFS</variation>
    <location>
        <position position="185"/>
    </location>
</feature>
<comment type="function">
    <text evidence="4 5 6 9 10">Forms voltage-independent, pH-gated trimeric sodium channels that act as postsynaptic excitatory receptors in the nervous system, playing a crucial role in regulating synaptic plasticity, learning, and memory (PubMed:11988176, PubMed:12843249, PubMed:15369669, PubMed:17060608). Upon extracellular pH drop this channel elicits transient, fast activating, and completely desensitizing inward currents (PubMed:15369669). Displays high selectivity for sodium ions but can also permit the permeation of other cations (PubMed:15369669). Regulates more or less directly intracellular calcium concentration and CaMKII phosphorylation, and thereby the density of dendritic spines (PubMed:15369669, PubMed:17060608). Modulates neuronal activity in the circuits underlying innate fear (PubMed:17662962).</text>
</comment>
<comment type="function">
    <molecule>Isoform Asic1b</molecule>
    <text evidence="11 12">Has high selectivity for sodium ions but is also potentially permeable to other cations including potassium (PubMed:18158916, PubMed:21036899). Could function in cochlear mechanoelectrical transduction (PubMed:18158916).</text>
</comment>
<comment type="catalytic activity">
    <reaction evidence="6">
        <text>Na(+)(in) = Na(+)(out)</text>
        <dbReference type="Rhea" id="RHEA:34963"/>
        <dbReference type="ChEBI" id="CHEBI:29101"/>
    </reaction>
</comment>
<comment type="catalytic activity">
    <reaction evidence="6">
        <text>Ca(2+)(in) = Ca(2+)(out)</text>
        <dbReference type="Rhea" id="RHEA:29671"/>
        <dbReference type="ChEBI" id="CHEBI:29108"/>
    </reaction>
</comment>
<comment type="catalytic activity">
    <molecule>Isoform Asic1b</molecule>
    <reaction evidence="11">
        <text>Na(+)(in) = Na(+)(out)</text>
        <dbReference type="Rhea" id="RHEA:34963"/>
        <dbReference type="ChEBI" id="CHEBI:29101"/>
    </reaction>
</comment>
<comment type="catalytic activity">
    <molecule>Isoform Asic1b</molecule>
    <reaction evidence="11">
        <text>K(+)(in) = K(+)(out)</text>
        <dbReference type="Rhea" id="RHEA:29463"/>
        <dbReference type="ChEBI" id="CHEBI:29103"/>
    </reaction>
</comment>
<comment type="catalytic activity">
    <molecule>Isoform Asic1b</molecule>
    <reaction evidence="12">
        <text>Li(+)(in) = Li(+)(out)</text>
        <dbReference type="Rhea" id="RHEA:78551"/>
        <dbReference type="ChEBI" id="CHEBI:49713"/>
    </reaction>
</comment>
<comment type="activity regulation">
    <text evidence="6">Inhibited by the diuretic drug amiloride.</text>
</comment>
<comment type="activity regulation">
    <molecule>Isoform Asic1b</molecule>
    <text evidence="11">The activity of the channel is sensitive to rapid decrease in osmotic pressure.</text>
</comment>
<comment type="subunit">
    <text evidence="1 7">Homotrimer. Heterotrimer; with other ASIC proteins producing channel with different properties. Interacts with PICK1; regulates ASIC1 clustering in membranes (By similarity). Interacts with STOM; alters heterotrimeric ASIC channels activity (PubMed:15471860).</text>
</comment>
<comment type="interaction">
    <interactant intactId="EBI-15686410">
        <id>Q6NXK8-1</id>
    </interactant>
    <interactant intactId="EBI-1220676">
        <id>Q12791</id>
        <label>KCNMA1</label>
    </interactant>
    <organismsDiffer>true</organismsDiffer>
    <experiments>2</experiments>
</comment>
<comment type="subcellular location">
    <subcellularLocation>
        <location evidence="4">Cell membrane</location>
        <topology evidence="1">Multi-pass membrane protein</topology>
    </subcellularLocation>
    <subcellularLocation>
        <location evidence="16">Postsynaptic cell membrane</location>
    </subcellularLocation>
    <subcellularLocation>
        <location evidence="7 9">Cell projection</location>
        <location evidence="7 9">Dendrite</location>
    </subcellularLocation>
    <text evidence="4">Isolated in synaptosomes from the dendritic synapses of neurons.</text>
</comment>
<comment type="alternative products">
    <event type="alternative splicing"/>
    <isoform>
        <id>Q6NXK8-1</id>
        <name>Asic1a</name>
        <name>Asic alpha</name>
        <sequence type="displayed"/>
    </isoform>
    <isoform>
        <id>Q6NXK8-2</id>
        <name evidence="14">Asic1b</name>
        <name>Asic beta</name>
        <sequence type="described" ref="VSP_015614 VSP_015615"/>
    </isoform>
</comment>
<comment type="tissue specificity">
    <text evidence="4 5 8">Expressed in brain areas receiving strong excitatory corticofugal input. In hippocampus, expressed in the hilus of the dentate gyrus. In the cerebral cortex expressed in anterior and posterior cingulate cortex, sensory and motor cortices. In the sensory cortex strongest expression is detected in the whisker barrel field. In sensorimotor and cingulate cortex expression is elevated in layer III. Also expressed in basal ganglia, striatum, ventral pallidum, olfactory tubercle, and nucleus accumbens. Weakly expressed in thalamus with the exception of the habenula and the medial septal nuclei. In olfactory bulb, preferentially expressed in the glomerular layer, within glomeruli. Expressed in cerebellum in the molecular and granule cell layers. Strongly expressed in amygdala complex, particularly in the lateral and basolateral nuclei. Isoform 1 is more abundant in brain compared to isoform 2 (at protein level). Expressed in the nodose ganglion and dorsal root ganglion. Expressed in dendritic spine cells.</text>
</comment>
<comment type="domain">
    <text evidence="2">The second transmembrane domain (TM2) is a discontinuous alpha-helix disrupted by the GAS motif, which forms the selectivity filter by adopting an extended, belt-like conformation aligned approximately parallel to the membrane plane. This peptide belt encircles the waist of the channel and divides TM2 into two discontinuous helical segments. The distal helical segment of TM2 interacts with the cytoplasmic portion of the first transmembrane domain (TM1) from a neighboring subunit, contributing to the structural and functional integrity of the channel.</text>
</comment>
<comment type="PTM">
    <text evidence="1">pH-gating could be regulated by serine proteases.</text>
</comment>
<comment type="PTM">
    <text evidence="1">Phosphorylation by PKA regulates interaction with PICK1 and subcellular localization. Phosphorylation by PKC may regulate the channel.</text>
</comment>
<comment type="disruption phenotype">
    <text evidence="4 5 6 8 10">Knockout mice lacking Asic1 display absence of acid-evoked currents in hippocampal neurons and impaired hippocampal long-term potentiation (LTP) (PubMed:11988176). An absence of acid-evoked currents in amygdala neurons and an alteration of amygdala-dependent behavior including deficits in cue and context fear conditioning are also observed (PubMed:12843249). This is associated with altered spatial learning, memory capability and fear conditioning (PubMed:11988176, PubMed:15578512, PubMed:17662962). It also reduces fear in the open field test, reduced acoustic startle, and inhibited the fear response to predator odor indicating ASIC1 modulates activity in the circuits underlying innate fear (PubMed:17662962). The knockout of the gene likely protects the brains of mice from ischemic injury, primarily by preventing calcium influx into neurons during acidosis (PubMed:15369669). An increased mechanosensitivity of colonic and gastroesophageal mechanoreceptors and prolonged gastric emptying is also observed (PubMed:15578512).</text>
</comment>
<comment type="similarity">
    <text evidence="15">Belongs to the amiloride-sensitive sodium channel (TC 1.A.6) family. ASIC1 subfamily.</text>
</comment>
<evidence type="ECO:0000250" key="1">
    <source>
        <dbReference type="UniProtKB" id="P78348"/>
    </source>
</evidence>
<evidence type="ECO:0000250" key="2">
    <source>
        <dbReference type="UniProtKB" id="Q1XA76"/>
    </source>
</evidence>
<evidence type="ECO:0000255" key="3"/>
<evidence type="ECO:0000269" key="4">
    <source>
    </source>
</evidence>
<evidence type="ECO:0000269" key="5">
    <source>
    </source>
</evidence>
<evidence type="ECO:0000269" key="6">
    <source>
    </source>
</evidence>
<evidence type="ECO:0000269" key="7">
    <source>
    </source>
</evidence>
<evidence type="ECO:0000269" key="8">
    <source>
    </source>
</evidence>
<evidence type="ECO:0000269" key="9">
    <source>
    </source>
</evidence>
<evidence type="ECO:0000269" key="10">
    <source>
    </source>
</evidence>
<evidence type="ECO:0000269" key="11">
    <source>
    </source>
</evidence>
<evidence type="ECO:0000269" key="12">
    <source>
    </source>
</evidence>
<evidence type="ECO:0000303" key="13">
    <source>
    </source>
</evidence>
<evidence type="ECO:0000303" key="14">
    <source>
    </source>
</evidence>
<evidence type="ECO:0000305" key="15"/>
<evidence type="ECO:0000305" key="16">
    <source>
    </source>
</evidence>
<evidence type="ECO:0000305" key="17">
    <source>
    </source>
</evidence>
<evidence type="ECO:0000312" key="18">
    <source>
        <dbReference type="MGI" id="MGI:1194915"/>
    </source>
</evidence>
<evidence type="ECO:0007744" key="19">
    <source>
    </source>
</evidence>
<protein>
    <recommendedName>
        <fullName evidence="17">Acid-sensing ion channel 1</fullName>
        <shortName evidence="17">ASIC1</shortName>
    </recommendedName>
    <alternativeName>
        <fullName evidence="13">Acid-sensing ion channel</fullName>
    </alternativeName>
    <alternativeName>
        <fullName>Amiloride-sensitive cation channel 2, neuronal</fullName>
    </alternativeName>
    <alternativeName>
        <fullName>Brain sodium channel 2</fullName>
    </alternativeName>
</protein>
<accession>Q6NXK8</accession>
<accession>Q50K97</accession>
<name>ASIC1_MOUSE</name>
<reference key="1">
    <citation type="journal article" date="2008" name="Biochem. Biophys. Res. Commun.">
        <title>Hypotonic stimuli enhance proton-gated currents of acid-sensing ion channel-1b.</title>
        <authorList>
            <person name="Ugawa S."/>
            <person name="Ishida Y."/>
            <person name="Ueda T."/>
            <person name="Yu Y."/>
            <person name="Shimada S."/>
        </authorList>
    </citation>
    <scope>NUCLEOTIDE SEQUENCE [MRNA] (ISOFORM ASIC1B)</scope>
    <scope>FUNCTION (ISOFORM ASIC1B)</scope>
    <scope>TRANSPORTER ACTIVITY (ISOFORM ASIC1B)</scope>
    <scope>ACTIVITY REGULATION (ISOFORM ASIC1B)</scope>
</reference>
<reference key="2">
    <citation type="journal article" date="2004" name="Genome Res.">
        <title>The status, quality, and expansion of the NIH full-length cDNA project: the Mammalian Gene Collection (MGC).</title>
        <authorList>
            <consortium name="The MGC Project Team"/>
        </authorList>
    </citation>
    <scope>NUCLEOTIDE SEQUENCE [LARGE SCALE MRNA] (ISOFORM ASIC1A)</scope>
    <source>
        <strain>C57BL/6J</strain>
        <tissue>Brain</tissue>
    </source>
</reference>
<reference key="3">
    <citation type="journal article" date="2010" name="J. Biol. Chem.">
        <title>Identification of a calcium permeable human acid-sensing ion channel 1 transcript variant.</title>
        <authorList>
            <person name="Hoagland E.N."/>
            <person name="Sherwood T.W."/>
            <person name="Lee K.G."/>
            <person name="Walker C.J."/>
            <person name="Askwith C.C."/>
        </authorList>
    </citation>
    <scope>FUNCTION (ISOFORM ASIC1B)</scope>
    <scope>TRANSPORTER ACTIVITY (ISOFORM ASIC1B)</scope>
    <source>
        <tissue>Spinal ganglion</tissue>
    </source>
</reference>
<reference key="4">
    <citation type="journal article" date="2002" name="Neuron">
        <title>The acid-activated ion channel ASIC contributes to synaptic plasticity, learning, and memory.</title>
        <authorList>
            <person name="Wemmie J.A."/>
            <person name="Chen J."/>
            <person name="Askwith C.C."/>
            <person name="Hruska-Hageman A.M."/>
            <person name="Price M.P."/>
            <person name="Nolan B.C."/>
            <person name="Yoder P.G."/>
            <person name="Lamani E."/>
            <person name="Hoshi T."/>
            <person name="Freeman J.H. Jr."/>
            <person name="Welsh M.J."/>
        </authorList>
    </citation>
    <scope>FUNCTION</scope>
    <scope>SUBCELLULAR LOCATION</scope>
    <scope>TISSUE SPECIFICITY</scope>
    <scope>DISRUPTION PHENOTYPE</scope>
</reference>
<reference key="5">
    <citation type="journal article" date="2003" name="J. Neurosci.">
        <title>Acid-sensing ion channel 1 is localized in brain regions with high synaptic density and contributes to fear conditioning.</title>
        <authorList>
            <person name="Wemmie J.A."/>
            <person name="Askwith C.C."/>
            <person name="Lamani E."/>
            <person name="Cassell M.D."/>
            <person name="Freeman J.H. Jr."/>
            <person name="Welsh M.J."/>
        </authorList>
    </citation>
    <scope>FUNCTION</scope>
    <scope>DISRUPTION PHENOTYPE</scope>
    <scope>TISSUE SPECIFICITY</scope>
</reference>
<reference key="6">
    <citation type="journal article" date="2004" name="Cell">
        <title>Neuroprotection in ischemia: blocking calcium-permeable acid-sensing ion channels.</title>
        <authorList>
            <person name="Xiong Z.-G."/>
            <person name="Zhu X.-M."/>
            <person name="Chu X.-P."/>
            <person name="Minami M."/>
            <person name="Hey J."/>
            <person name="Wei W.-L."/>
            <person name="MacDonald J.F."/>
            <person name="Wemmie J.A."/>
            <person name="Price M.P."/>
            <person name="Welsh M.J."/>
            <person name="Simon R.P."/>
        </authorList>
    </citation>
    <scope>FUNCTION</scope>
    <scope>TRANSPORTER ACTIVITY</scope>
    <scope>ACTIVITY REGULATION</scope>
    <scope>DISRUPTION PHENOTYPE</scope>
</reference>
<reference key="7">
    <citation type="journal article" date="2004" name="Gastroenterology">
        <title>The ion channel ASIC1 contributes to visceral but not cutaneous mechanoreceptor function.</title>
        <authorList>
            <person name="Page A.J."/>
            <person name="Brierley S.M."/>
            <person name="Martin C.M."/>
            <person name="Martinez-Salgado C."/>
            <person name="Wemmie J.A."/>
            <person name="Brennan T.J."/>
            <person name="Symonds E."/>
            <person name="Omari T."/>
            <person name="Lewin G.R."/>
            <person name="Welsh M.J."/>
            <person name="Blackshaw L.A."/>
        </authorList>
    </citation>
    <scope>DISRUPTION PHENOTYPE</scope>
    <scope>TISSUE SPECIFICITY</scope>
</reference>
<reference key="8">
    <citation type="journal article" date="2004" name="J. Biol. Chem.">
        <title>Stomatin modulates gating of acid-sensing ion channels.</title>
        <authorList>
            <person name="Price M.P."/>
            <person name="Thompson R.J."/>
            <person name="Eshcol J.O."/>
            <person name="Wemmie J.A."/>
            <person name="Benson C.J."/>
        </authorList>
    </citation>
    <scope>INTERACTION WITH STOM</scope>
    <scope>SUBCELLULAR LOCATION</scope>
</reference>
<reference key="9">
    <citation type="journal article" date="2006" name="Proc. Natl. Acad. Sci. U.S.A.">
        <title>Acid-sensing ion channel 1a is a postsynaptic proton receptor that affects the density of dendritic spines.</title>
        <authorList>
            <person name="Zha X.-M."/>
            <person name="Wemmie J.A."/>
            <person name="Green S.H."/>
            <person name="Welsh M.J."/>
        </authorList>
    </citation>
    <scope>FUNCTION</scope>
    <scope>SUBCELLULAR LOCATION</scope>
</reference>
<reference key="10">
    <citation type="journal article" date="2007" name="Biol. Psychiatry">
        <title>Targeting ASIC1a reduces innate fear and alters neuronal activity in the fear circuit.</title>
        <authorList>
            <person name="Coryell M.W."/>
            <person name="Ziemann A.E."/>
            <person name="Westmoreland P.J."/>
            <person name="Haenfler J.M."/>
            <person name="Kurjakovic Z."/>
            <person name="Zha X.-M."/>
            <person name="Price M."/>
            <person name="Schnizler M.K."/>
            <person name="Wemmie J.A."/>
        </authorList>
    </citation>
    <scope>FUNCTION</scope>
    <scope>DISRUPTION PHENOTYPE</scope>
</reference>
<reference key="11">
    <citation type="journal article" date="2010" name="Cell">
        <title>A tissue-specific atlas of mouse protein phosphorylation and expression.</title>
        <authorList>
            <person name="Huttlin E.L."/>
            <person name="Jedrychowski M.P."/>
            <person name="Elias J.E."/>
            <person name="Goswami T."/>
            <person name="Rad R."/>
            <person name="Beausoleil S.A."/>
            <person name="Villen J."/>
            <person name="Haas W."/>
            <person name="Sowa M.E."/>
            <person name="Gygi S.P."/>
        </authorList>
    </citation>
    <scope>PHOSPHORYLATION [LARGE SCALE ANALYSIS] AT SER-497</scope>
    <scope>IDENTIFICATION BY MASS SPECTROMETRY [LARGE SCALE ANALYSIS]</scope>
    <source>
        <tissue>Brain</tissue>
    </source>
</reference>
<dbReference type="EMBL" id="AB208022">
    <property type="protein sequence ID" value="BAD97849.1"/>
    <property type="molecule type" value="mRNA"/>
</dbReference>
<dbReference type="EMBL" id="BC067025">
    <property type="protein sequence ID" value="AAH67025.1"/>
    <property type="molecule type" value="mRNA"/>
</dbReference>
<dbReference type="CCDS" id="CCDS27826.1">
    <molecule id="Q6NXK8-1"/>
</dbReference>
<dbReference type="CCDS" id="CCDS88841.1">
    <molecule id="Q6NXK8-2"/>
</dbReference>
<dbReference type="RefSeq" id="NP_001276720.1">
    <molecule id="Q6NXK8-2"/>
    <property type="nucleotide sequence ID" value="NM_001289791.2"/>
</dbReference>
<dbReference type="RefSeq" id="NP_033727.1">
    <molecule id="Q6NXK8-1"/>
    <property type="nucleotide sequence ID" value="NM_009597.2"/>
</dbReference>
<dbReference type="RefSeq" id="XP_036014967.1">
    <molecule id="Q6NXK8-1"/>
    <property type="nucleotide sequence ID" value="XM_036159074.1"/>
</dbReference>
<dbReference type="SMR" id="Q6NXK8"/>
<dbReference type="BioGRID" id="197918">
    <property type="interactions" value="4"/>
</dbReference>
<dbReference type="DIP" id="DIP-29728N"/>
<dbReference type="FunCoup" id="Q6NXK8">
    <property type="interactions" value="794"/>
</dbReference>
<dbReference type="IntAct" id="Q6NXK8">
    <property type="interactions" value="2"/>
</dbReference>
<dbReference type="STRING" id="10090.ENSMUSP00000023758"/>
<dbReference type="BindingDB" id="Q6NXK8"/>
<dbReference type="ChEMBL" id="CHEMBL3232694"/>
<dbReference type="GlyConnect" id="2416">
    <molecule id="Q6NXK8-2"/>
    <property type="glycosylation" value="1 N-Linked glycan (1 site)"/>
</dbReference>
<dbReference type="GlyCosmos" id="Q6NXK8">
    <property type="glycosylation" value="2 sites, No reported glycans"/>
</dbReference>
<dbReference type="GlyGen" id="Q6NXK8">
    <property type="glycosylation" value="4 sites, 1 N-linked glycan (1 site)"/>
</dbReference>
<dbReference type="iPTMnet" id="Q6NXK8"/>
<dbReference type="PhosphoSitePlus" id="Q6NXK8"/>
<dbReference type="SwissPalm" id="Q6NXK8"/>
<dbReference type="PaxDb" id="10090-ENSMUSP00000023758"/>
<dbReference type="PeptideAtlas" id="Q6NXK8"/>
<dbReference type="ProteomicsDB" id="281843">
    <molecule id="Q6NXK8-1"/>
</dbReference>
<dbReference type="ProteomicsDB" id="281844">
    <molecule id="Q6NXK8-2"/>
</dbReference>
<dbReference type="ABCD" id="Q6NXK8">
    <property type="antibodies" value="1 sequenced antibody"/>
</dbReference>
<dbReference type="Antibodypedia" id="26132">
    <property type="antibodies" value="376 antibodies from 37 providers"/>
</dbReference>
<dbReference type="DNASU" id="11419"/>
<dbReference type="Ensembl" id="ENSMUST00000023758.9">
    <molecule id="Q6NXK8-1"/>
    <property type="protein sequence ID" value="ENSMUSP00000023758.8"/>
    <property type="gene ID" value="ENSMUSG00000023017.11"/>
</dbReference>
<dbReference type="Ensembl" id="ENSMUST00000228185.2">
    <molecule id="Q6NXK8-2"/>
    <property type="protein sequence ID" value="ENSMUSP00000154379.2"/>
    <property type="gene ID" value="ENSMUSG00000023017.11"/>
</dbReference>
<dbReference type="GeneID" id="11419"/>
<dbReference type="KEGG" id="mmu:11419"/>
<dbReference type="UCSC" id="uc007xqa.2">
    <molecule id="Q6NXK8-1"/>
    <property type="organism name" value="mouse"/>
</dbReference>
<dbReference type="UCSC" id="uc011zzg.2">
    <molecule id="Q6NXK8-2"/>
    <property type="organism name" value="mouse"/>
</dbReference>
<dbReference type="AGR" id="MGI:1194915"/>
<dbReference type="CTD" id="41"/>
<dbReference type="MGI" id="MGI:1194915">
    <property type="gene designation" value="Asic1"/>
</dbReference>
<dbReference type="VEuPathDB" id="HostDB:ENSMUSG00000023017"/>
<dbReference type="eggNOG" id="KOG4294">
    <property type="taxonomic scope" value="Eukaryota"/>
</dbReference>
<dbReference type="GeneTree" id="ENSGT00940000158414"/>
<dbReference type="HOGENOM" id="CLU_020415_1_2_1"/>
<dbReference type="InParanoid" id="Q6NXK8"/>
<dbReference type="OMA" id="EVAASHM"/>
<dbReference type="OrthoDB" id="3290at9989"/>
<dbReference type="PhylomeDB" id="Q6NXK8"/>
<dbReference type="TreeFam" id="TF330663"/>
<dbReference type="Reactome" id="R-MMU-2672351">
    <property type="pathway name" value="Stimuli-sensing channels"/>
</dbReference>
<dbReference type="BioGRID-ORCS" id="11419">
    <property type="hits" value="3 hits in 82 CRISPR screens"/>
</dbReference>
<dbReference type="CD-CODE" id="CE726F99">
    <property type="entry name" value="Postsynaptic density"/>
</dbReference>
<dbReference type="ChiTaRS" id="Asic1">
    <property type="organism name" value="mouse"/>
</dbReference>
<dbReference type="PRO" id="PR:Q6NXK8"/>
<dbReference type="Proteomes" id="UP000000589">
    <property type="component" value="Chromosome 15"/>
</dbReference>
<dbReference type="RNAct" id="Q6NXK8">
    <property type="molecule type" value="protein"/>
</dbReference>
<dbReference type="Bgee" id="ENSMUSG00000023017">
    <property type="expression patterns" value="Expressed in cortical plate and 126 other cell types or tissues"/>
</dbReference>
<dbReference type="GO" id="GO:0043198">
    <property type="term" value="C:dendritic shaft"/>
    <property type="evidence" value="ECO:0000266"/>
    <property type="project" value="MGI"/>
</dbReference>
<dbReference type="GO" id="GO:0043197">
    <property type="term" value="C:dendritic spine"/>
    <property type="evidence" value="ECO:0000266"/>
    <property type="project" value="MGI"/>
</dbReference>
<dbReference type="GO" id="GO:0098978">
    <property type="term" value="C:glutamatergic synapse"/>
    <property type="evidence" value="ECO:0000314"/>
    <property type="project" value="SynGO"/>
</dbReference>
<dbReference type="GO" id="GO:0005794">
    <property type="term" value="C:Golgi apparatus"/>
    <property type="evidence" value="ECO:0007669"/>
    <property type="project" value="Ensembl"/>
</dbReference>
<dbReference type="GO" id="GO:0016020">
    <property type="term" value="C:membrane"/>
    <property type="evidence" value="ECO:0000266"/>
    <property type="project" value="MGI"/>
</dbReference>
<dbReference type="GO" id="GO:0005886">
    <property type="term" value="C:plasma membrane"/>
    <property type="evidence" value="ECO:0000314"/>
    <property type="project" value="UniProtKB"/>
</dbReference>
<dbReference type="GO" id="GO:0098839">
    <property type="term" value="C:postsynaptic density membrane"/>
    <property type="evidence" value="ECO:0007669"/>
    <property type="project" value="Ensembl"/>
</dbReference>
<dbReference type="GO" id="GO:0098793">
    <property type="term" value="C:presynapse"/>
    <property type="evidence" value="ECO:0007669"/>
    <property type="project" value="GOC"/>
</dbReference>
<dbReference type="GO" id="GO:0045202">
    <property type="term" value="C:synapse"/>
    <property type="evidence" value="ECO:0000314"/>
    <property type="project" value="MGI"/>
</dbReference>
<dbReference type="GO" id="GO:0022890">
    <property type="term" value="F:inorganic cation transmembrane transporter activity"/>
    <property type="evidence" value="ECO:0000266"/>
    <property type="project" value="MGI"/>
</dbReference>
<dbReference type="GO" id="GO:0015280">
    <property type="term" value="F:ligand-gated sodium channel activity"/>
    <property type="evidence" value="ECO:0007669"/>
    <property type="project" value="InterPro"/>
</dbReference>
<dbReference type="GO" id="GO:0005261">
    <property type="term" value="F:monoatomic cation channel activity"/>
    <property type="evidence" value="ECO:0000314"/>
    <property type="project" value="MGI"/>
</dbReference>
<dbReference type="GO" id="GO:0022839">
    <property type="term" value="F:monoatomic ion-gated channel activity"/>
    <property type="evidence" value="ECO:0000314"/>
    <property type="project" value="MGI"/>
</dbReference>
<dbReference type="GO" id="GO:0160128">
    <property type="term" value="F:pH-gated monoatomic ion channel activity"/>
    <property type="evidence" value="ECO:0000314"/>
    <property type="project" value="UniProtKB"/>
</dbReference>
<dbReference type="GO" id="GO:0008306">
    <property type="term" value="P:associative learning"/>
    <property type="evidence" value="ECO:0000315"/>
    <property type="project" value="MGI"/>
</dbReference>
<dbReference type="GO" id="GO:0001662">
    <property type="term" value="P:behavioral fear response"/>
    <property type="evidence" value="ECO:0000315"/>
    <property type="project" value="MGI"/>
</dbReference>
<dbReference type="GO" id="GO:0070588">
    <property type="term" value="P:calcium ion transmembrane transport"/>
    <property type="evidence" value="ECO:0000315"/>
    <property type="project" value="MGI"/>
</dbReference>
<dbReference type="GO" id="GO:0071467">
    <property type="term" value="P:cellular response to pH"/>
    <property type="evidence" value="ECO:0000250"/>
    <property type="project" value="UniProtKB"/>
</dbReference>
<dbReference type="GO" id="GO:0051649">
    <property type="term" value="P:establishment of localization in cell"/>
    <property type="evidence" value="ECO:0000315"/>
    <property type="project" value="MGI"/>
</dbReference>
<dbReference type="GO" id="GO:0098662">
    <property type="term" value="P:inorganic cation transmembrane transport"/>
    <property type="evidence" value="ECO:0000266"/>
    <property type="project" value="MGI"/>
</dbReference>
<dbReference type="GO" id="GO:0007613">
    <property type="term" value="P:memory"/>
    <property type="evidence" value="ECO:0000315"/>
    <property type="project" value="MGI"/>
</dbReference>
<dbReference type="GO" id="GO:0006812">
    <property type="term" value="P:monoatomic cation transport"/>
    <property type="evidence" value="ECO:0000314"/>
    <property type="project" value="MGI"/>
</dbReference>
<dbReference type="GO" id="GO:0034220">
    <property type="term" value="P:monoatomic ion transmembrane transport"/>
    <property type="evidence" value="ECO:0000314"/>
    <property type="project" value="MGI"/>
</dbReference>
<dbReference type="GO" id="GO:0046929">
    <property type="term" value="P:negative regulation of neurotransmitter secretion"/>
    <property type="evidence" value="ECO:0000315"/>
    <property type="project" value="MGI"/>
</dbReference>
<dbReference type="GO" id="GO:0007269">
    <property type="term" value="P:neurotransmitter secretion"/>
    <property type="evidence" value="ECO:0000315"/>
    <property type="project" value="MGI"/>
</dbReference>
<dbReference type="GO" id="GO:0042391">
    <property type="term" value="P:regulation of membrane potential"/>
    <property type="evidence" value="ECO:0000315"/>
    <property type="project" value="MGI"/>
</dbReference>
<dbReference type="GO" id="GO:0150052">
    <property type="term" value="P:regulation of postsynapse assembly"/>
    <property type="evidence" value="ECO:0000314"/>
    <property type="project" value="SynGO"/>
</dbReference>
<dbReference type="GO" id="GO:0010447">
    <property type="term" value="P:response to acidic pH"/>
    <property type="evidence" value="ECO:0000314"/>
    <property type="project" value="MGI"/>
</dbReference>
<dbReference type="GO" id="GO:0001975">
    <property type="term" value="P:response to amphetamine"/>
    <property type="evidence" value="ECO:0000315"/>
    <property type="project" value="MGI"/>
</dbReference>
<dbReference type="GO" id="GO:0050915">
    <property type="term" value="P:sensory perception of sour taste"/>
    <property type="evidence" value="ECO:0007669"/>
    <property type="project" value="Ensembl"/>
</dbReference>
<dbReference type="GO" id="GO:0035725">
    <property type="term" value="P:sodium ion transmembrane transport"/>
    <property type="evidence" value="ECO:0000250"/>
    <property type="project" value="UniProtKB"/>
</dbReference>
<dbReference type="FunFam" id="2.60.470.10:FF:000001">
    <property type="entry name" value="Acid-sensing (proton-gated) ion channel family member 4a"/>
    <property type="match status" value="1"/>
</dbReference>
<dbReference type="FunFam" id="1.10.287.820:FF:000001">
    <property type="entry name" value="acid-sensing ion channel 1 isoform X2"/>
    <property type="match status" value="1"/>
</dbReference>
<dbReference type="FunFam" id="1.10.3590.10:FF:000001">
    <property type="entry name" value="acid-sensing ion channel 1 isoform X2"/>
    <property type="match status" value="1"/>
</dbReference>
<dbReference type="FunFam" id="1.10.3590.10:FF:000002">
    <property type="entry name" value="acid-sensing ion channel 1 isoform X2"/>
    <property type="match status" value="1"/>
</dbReference>
<dbReference type="FunFam" id="1.10.287.770:FF:000001">
    <property type="entry name" value="Acid-sensing ion channel subunit 1"/>
    <property type="match status" value="1"/>
</dbReference>
<dbReference type="Gene3D" id="1.10.3590.10">
    <property type="entry name" value="acid-sensing ion channel 1 domain"/>
    <property type="match status" value="2"/>
</dbReference>
<dbReference type="Gene3D" id="1.10.287.820">
    <property type="entry name" value="Acid-sensing ion channel domain"/>
    <property type="match status" value="1"/>
</dbReference>
<dbReference type="Gene3D" id="1.10.287.770">
    <property type="entry name" value="YojJ-like"/>
    <property type="match status" value="2"/>
</dbReference>
<dbReference type="InterPro" id="IPR001873">
    <property type="entry name" value="ENaC"/>
</dbReference>
<dbReference type="InterPro" id="IPR004724">
    <property type="entry name" value="ENaC_chordates"/>
</dbReference>
<dbReference type="InterPro" id="IPR020903">
    <property type="entry name" value="ENaC_CS"/>
</dbReference>
<dbReference type="NCBIfam" id="TIGR00859">
    <property type="entry name" value="ENaC"/>
    <property type="match status" value="1"/>
</dbReference>
<dbReference type="PANTHER" id="PTHR11690:SF170">
    <property type="entry name" value="ACID-SENSING ION CHANNEL 1"/>
    <property type="match status" value="1"/>
</dbReference>
<dbReference type="PANTHER" id="PTHR11690">
    <property type="entry name" value="AMILORIDE-SENSITIVE SODIUM CHANNEL-RELATED"/>
    <property type="match status" value="1"/>
</dbReference>
<dbReference type="Pfam" id="PF00858">
    <property type="entry name" value="ASC"/>
    <property type="match status" value="1"/>
</dbReference>
<dbReference type="PRINTS" id="PR01078">
    <property type="entry name" value="AMINACHANNEL"/>
</dbReference>
<dbReference type="PROSITE" id="PS01206">
    <property type="entry name" value="ASC"/>
    <property type="match status" value="1"/>
</dbReference>
<gene>
    <name evidence="18" type="primary">Asic1</name>
    <name type="synonym">Accn2</name>
    <name evidence="13" type="synonym">Asic</name>
    <name evidence="13" type="synonym">Bnac2</name>
</gene>
<organism>
    <name type="scientific">Mus musculus</name>
    <name type="common">Mouse</name>
    <dbReference type="NCBI Taxonomy" id="10090"/>
    <lineage>
        <taxon>Eukaryota</taxon>
        <taxon>Metazoa</taxon>
        <taxon>Chordata</taxon>
        <taxon>Craniata</taxon>
        <taxon>Vertebrata</taxon>
        <taxon>Euteleostomi</taxon>
        <taxon>Mammalia</taxon>
        <taxon>Eutheria</taxon>
        <taxon>Euarchontoglires</taxon>
        <taxon>Glires</taxon>
        <taxon>Rodentia</taxon>
        <taxon>Myomorpha</taxon>
        <taxon>Muroidea</taxon>
        <taxon>Muridae</taxon>
        <taxon>Murinae</taxon>
        <taxon>Mus</taxon>
        <taxon>Mus</taxon>
    </lineage>
</organism>
<keyword id="KW-0025">Alternative splicing</keyword>
<keyword id="KW-0106">Calcium</keyword>
<keyword id="KW-0109">Calcium transport</keyword>
<keyword id="KW-1003">Cell membrane</keyword>
<keyword id="KW-0966">Cell projection</keyword>
<keyword id="KW-1015">Disulfide bond</keyword>
<keyword id="KW-0325">Glycoprotein</keyword>
<keyword id="KW-0407">Ion channel</keyword>
<keyword id="KW-0406">Ion transport</keyword>
<keyword id="KW-0472">Membrane</keyword>
<keyword id="KW-0597">Phosphoprotein</keyword>
<keyword id="KW-0628">Postsynaptic cell membrane</keyword>
<keyword id="KW-1185">Reference proteome</keyword>
<keyword id="KW-0915">Sodium</keyword>
<keyword id="KW-0894">Sodium channel</keyword>
<keyword id="KW-0739">Sodium transport</keyword>
<keyword id="KW-0770">Synapse</keyword>
<keyword id="KW-0812">Transmembrane</keyword>
<keyword id="KW-1133">Transmembrane helix</keyword>
<keyword id="KW-0813">Transport</keyword>
<proteinExistence type="evidence at protein level"/>